<dbReference type="EC" id="2.4.2.17" evidence="1"/>
<dbReference type="EMBL" id="CP000544">
    <property type="protein sequence ID" value="ABM62877.1"/>
    <property type="molecule type" value="Genomic_DNA"/>
</dbReference>
<dbReference type="RefSeq" id="WP_011814899.1">
    <property type="nucleotide sequence ID" value="NC_008789.1"/>
</dbReference>
<dbReference type="SMR" id="A1WYW5"/>
<dbReference type="STRING" id="349124.Hhal_2113"/>
<dbReference type="KEGG" id="hha:Hhal_2113"/>
<dbReference type="eggNOG" id="COG0040">
    <property type="taxonomic scope" value="Bacteria"/>
</dbReference>
<dbReference type="HOGENOM" id="CLU_038115_2_0_6"/>
<dbReference type="OrthoDB" id="9801867at2"/>
<dbReference type="UniPathway" id="UPA00031">
    <property type="reaction ID" value="UER00006"/>
</dbReference>
<dbReference type="Proteomes" id="UP000000647">
    <property type="component" value="Chromosome"/>
</dbReference>
<dbReference type="GO" id="GO:0005737">
    <property type="term" value="C:cytoplasm"/>
    <property type="evidence" value="ECO:0007669"/>
    <property type="project" value="UniProtKB-SubCell"/>
</dbReference>
<dbReference type="GO" id="GO:0005524">
    <property type="term" value="F:ATP binding"/>
    <property type="evidence" value="ECO:0007669"/>
    <property type="project" value="UniProtKB-KW"/>
</dbReference>
<dbReference type="GO" id="GO:0003879">
    <property type="term" value="F:ATP phosphoribosyltransferase activity"/>
    <property type="evidence" value="ECO:0007669"/>
    <property type="project" value="UniProtKB-UniRule"/>
</dbReference>
<dbReference type="GO" id="GO:0000105">
    <property type="term" value="P:L-histidine biosynthetic process"/>
    <property type="evidence" value="ECO:0007669"/>
    <property type="project" value="UniProtKB-UniRule"/>
</dbReference>
<dbReference type="CDD" id="cd13595">
    <property type="entry name" value="PBP2_HisGs"/>
    <property type="match status" value="1"/>
</dbReference>
<dbReference type="FunFam" id="3.40.190.10:FF:000008">
    <property type="entry name" value="ATP phosphoribosyltransferase"/>
    <property type="match status" value="1"/>
</dbReference>
<dbReference type="FunFam" id="3.40.190.10:FF:000011">
    <property type="entry name" value="ATP phosphoribosyltransferase"/>
    <property type="match status" value="1"/>
</dbReference>
<dbReference type="Gene3D" id="3.40.190.10">
    <property type="entry name" value="Periplasmic binding protein-like II"/>
    <property type="match status" value="2"/>
</dbReference>
<dbReference type="HAMAP" id="MF_01018">
    <property type="entry name" value="HisG_Short"/>
    <property type="match status" value="1"/>
</dbReference>
<dbReference type="InterPro" id="IPR013820">
    <property type="entry name" value="ATP_PRibTrfase_cat"/>
</dbReference>
<dbReference type="InterPro" id="IPR018198">
    <property type="entry name" value="ATP_PRibTrfase_CS"/>
</dbReference>
<dbReference type="InterPro" id="IPR001348">
    <property type="entry name" value="ATP_PRibTrfase_HisG"/>
</dbReference>
<dbReference type="InterPro" id="IPR024893">
    <property type="entry name" value="ATP_PRibTrfase_HisG_short"/>
</dbReference>
<dbReference type="NCBIfam" id="TIGR00070">
    <property type="entry name" value="hisG"/>
    <property type="match status" value="1"/>
</dbReference>
<dbReference type="PANTHER" id="PTHR21403:SF8">
    <property type="entry name" value="ATP PHOSPHORIBOSYLTRANSFERASE"/>
    <property type="match status" value="1"/>
</dbReference>
<dbReference type="PANTHER" id="PTHR21403">
    <property type="entry name" value="ATP PHOSPHORIBOSYLTRANSFERASE ATP-PRTASE"/>
    <property type="match status" value="1"/>
</dbReference>
<dbReference type="Pfam" id="PF01634">
    <property type="entry name" value="HisG"/>
    <property type="match status" value="1"/>
</dbReference>
<dbReference type="SUPFAM" id="SSF53850">
    <property type="entry name" value="Periplasmic binding protein-like II"/>
    <property type="match status" value="1"/>
</dbReference>
<dbReference type="PROSITE" id="PS01316">
    <property type="entry name" value="ATP_P_PHORIBOSYLTR"/>
    <property type="match status" value="1"/>
</dbReference>
<organism>
    <name type="scientific">Halorhodospira halophila (strain DSM 244 / SL1)</name>
    <name type="common">Ectothiorhodospira halophila (strain DSM 244 / SL1)</name>
    <dbReference type="NCBI Taxonomy" id="349124"/>
    <lineage>
        <taxon>Bacteria</taxon>
        <taxon>Pseudomonadati</taxon>
        <taxon>Pseudomonadota</taxon>
        <taxon>Gammaproteobacteria</taxon>
        <taxon>Chromatiales</taxon>
        <taxon>Ectothiorhodospiraceae</taxon>
        <taxon>Halorhodospira</taxon>
    </lineage>
</organism>
<keyword id="KW-0028">Amino-acid biosynthesis</keyword>
<keyword id="KW-0067">ATP-binding</keyword>
<keyword id="KW-0963">Cytoplasm</keyword>
<keyword id="KW-0328">Glycosyltransferase</keyword>
<keyword id="KW-0368">Histidine biosynthesis</keyword>
<keyword id="KW-0547">Nucleotide-binding</keyword>
<keyword id="KW-1185">Reference proteome</keyword>
<keyword id="KW-0808">Transferase</keyword>
<comment type="function">
    <text evidence="1">Catalyzes the condensation of ATP and 5-phosphoribose 1-diphosphate to form N'-(5'-phosphoribosyl)-ATP (PR-ATP). Has a crucial role in the pathway because the rate of histidine biosynthesis seems to be controlled primarily by regulation of HisG enzymatic activity.</text>
</comment>
<comment type="catalytic activity">
    <reaction evidence="1">
        <text>1-(5-phospho-beta-D-ribosyl)-ATP + diphosphate = 5-phospho-alpha-D-ribose 1-diphosphate + ATP</text>
        <dbReference type="Rhea" id="RHEA:18473"/>
        <dbReference type="ChEBI" id="CHEBI:30616"/>
        <dbReference type="ChEBI" id="CHEBI:33019"/>
        <dbReference type="ChEBI" id="CHEBI:58017"/>
        <dbReference type="ChEBI" id="CHEBI:73183"/>
        <dbReference type="EC" id="2.4.2.17"/>
    </reaction>
</comment>
<comment type="pathway">
    <text evidence="1">Amino-acid biosynthesis; L-histidine biosynthesis; L-histidine from 5-phospho-alpha-D-ribose 1-diphosphate: step 1/9.</text>
</comment>
<comment type="subunit">
    <text evidence="1">Heteromultimer composed of HisG and HisZ subunits.</text>
</comment>
<comment type="subcellular location">
    <subcellularLocation>
        <location evidence="1">Cytoplasm</location>
    </subcellularLocation>
</comment>
<comment type="domain">
    <text>Lacks the C-terminal regulatory region which is replaced by HisZ.</text>
</comment>
<comment type="similarity">
    <text evidence="1">Belongs to the ATP phosphoribosyltransferase family. Short subfamily.</text>
</comment>
<reference key="1">
    <citation type="submission" date="2006-12" db="EMBL/GenBank/DDBJ databases">
        <title>Complete sequence of Halorhodospira halophila SL1.</title>
        <authorList>
            <consortium name="US DOE Joint Genome Institute"/>
            <person name="Copeland A."/>
            <person name="Lucas S."/>
            <person name="Lapidus A."/>
            <person name="Barry K."/>
            <person name="Detter J.C."/>
            <person name="Glavina del Rio T."/>
            <person name="Hammon N."/>
            <person name="Israni S."/>
            <person name="Dalin E."/>
            <person name="Tice H."/>
            <person name="Pitluck S."/>
            <person name="Saunders E."/>
            <person name="Brettin T."/>
            <person name="Bruce D."/>
            <person name="Han C."/>
            <person name="Tapia R."/>
            <person name="Schmutz J."/>
            <person name="Larimer F."/>
            <person name="Land M."/>
            <person name="Hauser L."/>
            <person name="Kyrpides N."/>
            <person name="Mikhailova N."/>
            <person name="Hoff W."/>
            <person name="Richardson P."/>
        </authorList>
    </citation>
    <scope>NUCLEOTIDE SEQUENCE [LARGE SCALE GENOMIC DNA]</scope>
    <source>
        <strain>DSM 244 / SL1</strain>
    </source>
</reference>
<evidence type="ECO:0000255" key="1">
    <source>
        <dbReference type="HAMAP-Rule" id="MF_01018"/>
    </source>
</evidence>
<accession>A1WYW5</accession>
<gene>
    <name evidence="1" type="primary">hisG</name>
    <name type="ordered locus">Hhal_2113</name>
</gene>
<name>HIS1_HALHL</name>
<feature type="chain" id="PRO_0000319522" description="ATP phosphoribosyltransferase">
    <location>
        <begin position="1"/>
        <end position="214"/>
    </location>
</feature>
<sequence>MSRTLTLALSKGRILEETLPLLARCGIEPAEDPDASRKLIIGTNREDVRLLVVRASDVPTYVEHGGADLGVAGRDVLLEHGGDGLYDPVDLGIARCRLMVAGPPDGPPPGRRPRVATKFVHLARQHFAAQGRQAEIIKLYGSMELAPLVGMADLIVDLVDTGNTLRANGLAPLEEIMPISSRLVVNKASLKTSPDRLGTLIDDLAAAARAKDTS</sequence>
<proteinExistence type="inferred from homology"/>
<protein>
    <recommendedName>
        <fullName evidence="1">ATP phosphoribosyltransferase</fullName>
        <shortName evidence="1">ATP-PRT</shortName>
        <shortName evidence="1">ATP-PRTase</shortName>
        <ecNumber evidence="1">2.4.2.17</ecNumber>
    </recommendedName>
</protein>